<proteinExistence type="inferred from homology"/>
<accession>Q1KXS1</accession>
<dbReference type="EMBL" id="DQ383815">
    <property type="protein sequence ID" value="ABD47183.1"/>
    <property type="molecule type" value="Genomic_DNA"/>
</dbReference>
<dbReference type="RefSeq" id="YP_588155.1">
    <property type="nucleotide sequence ID" value="NC_007977.1"/>
</dbReference>
<dbReference type="SMR" id="Q1KXS1"/>
<dbReference type="GeneID" id="4055697"/>
<dbReference type="KEGG" id="han:4055697"/>
<dbReference type="OrthoDB" id="1850746at2759"/>
<dbReference type="GO" id="GO:0009507">
    <property type="term" value="C:chloroplast"/>
    <property type="evidence" value="ECO:0007669"/>
    <property type="project" value="UniProtKB-SubCell"/>
</dbReference>
<dbReference type="GO" id="GO:1990904">
    <property type="term" value="C:ribonucleoprotein complex"/>
    <property type="evidence" value="ECO:0007669"/>
    <property type="project" value="UniProtKB-KW"/>
</dbReference>
<dbReference type="GO" id="GO:0005840">
    <property type="term" value="C:ribosome"/>
    <property type="evidence" value="ECO:0007669"/>
    <property type="project" value="UniProtKB-KW"/>
</dbReference>
<dbReference type="GO" id="GO:0019843">
    <property type="term" value="F:rRNA binding"/>
    <property type="evidence" value="ECO:0007669"/>
    <property type="project" value="InterPro"/>
</dbReference>
<dbReference type="GO" id="GO:0003735">
    <property type="term" value="F:structural constituent of ribosome"/>
    <property type="evidence" value="ECO:0007669"/>
    <property type="project" value="InterPro"/>
</dbReference>
<dbReference type="GO" id="GO:0006412">
    <property type="term" value="P:translation"/>
    <property type="evidence" value="ECO:0007669"/>
    <property type="project" value="UniProtKB-UniRule"/>
</dbReference>
<dbReference type="CDD" id="cd01433">
    <property type="entry name" value="Ribosomal_L16_L10e"/>
    <property type="match status" value="1"/>
</dbReference>
<dbReference type="FunFam" id="3.90.1170.10:FF:000001">
    <property type="entry name" value="50S ribosomal protein L16"/>
    <property type="match status" value="1"/>
</dbReference>
<dbReference type="Gene3D" id="3.90.1170.10">
    <property type="entry name" value="Ribosomal protein L10e/L16"/>
    <property type="match status" value="1"/>
</dbReference>
<dbReference type="HAMAP" id="MF_01342">
    <property type="entry name" value="Ribosomal_uL16"/>
    <property type="match status" value="1"/>
</dbReference>
<dbReference type="InterPro" id="IPR047873">
    <property type="entry name" value="Ribosomal_uL16"/>
</dbReference>
<dbReference type="InterPro" id="IPR000114">
    <property type="entry name" value="Ribosomal_uL16_bact-type"/>
</dbReference>
<dbReference type="InterPro" id="IPR020798">
    <property type="entry name" value="Ribosomal_uL16_CS"/>
</dbReference>
<dbReference type="InterPro" id="IPR016180">
    <property type="entry name" value="Ribosomal_uL16_dom"/>
</dbReference>
<dbReference type="InterPro" id="IPR036920">
    <property type="entry name" value="Ribosomal_uL16_sf"/>
</dbReference>
<dbReference type="NCBIfam" id="TIGR01164">
    <property type="entry name" value="rplP_bact"/>
    <property type="match status" value="1"/>
</dbReference>
<dbReference type="PANTHER" id="PTHR12220">
    <property type="entry name" value="50S/60S RIBOSOMAL PROTEIN L16"/>
    <property type="match status" value="1"/>
</dbReference>
<dbReference type="PANTHER" id="PTHR12220:SF13">
    <property type="entry name" value="LARGE RIBOSOMAL SUBUNIT PROTEIN UL16M"/>
    <property type="match status" value="1"/>
</dbReference>
<dbReference type="Pfam" id="PF00252">
    <property type="entry name" value="Ribosomal_L16"/>
    <property type="match status" value="1"/>
</dbReference>
<dbReference type="PRINTS" id="PR00060">
    <property type="entry name" value="RIBOSOMALL16"/>
</dbReference>
<dbReference type="SUPFAM" id="SSF54686">
    <property type="entry name" value="Ribosomal protein L16p/L10e"/>
    <property type="match status" value="1"/>
</dbReference>
<dbReference type="PROSITE" id="PS00586">
    <property type="entry name" value="RIBOSOMAL_L16_1"/>
    <property type="match status" value="1"/>
</dbReference>
<dbReference type="PROSITE" id="PS00701">
    <property type="entry name" value="RIBOSOMAL_L16_2"/>
    <property type="match status" value="1"/>
</dbReference>
<protein>
    <recommendedName>
        <fullName evidence="1">Large ribosomal subunit protein uL16c</fullName>
    </recommendedName>
    <alternativeName>
        <fullName evidence="2">50S ribosomal protein L16, chloroplastic</fullName>
    </alternativeName>
</protein>
<geneLocation type="chloroplast"/>
<comment type="subunit">
    <text evidence="1">Part of the 50S ribosomal subunit.</text>
</comment>
<comment type="subcellular location">
    <subcellularLocation>
        <location>Plastid</location>
        <location>Chloroplast</location>
    </subcellularLocation>
</comment>
<comment type="similarity">
    <text evidence="1">Belongs to the universal ribosomal protein uL16 family.</text>
</comment>
<keyword id="KW-0150">Chloroplast</keyword>
<keyword id="KW-0934">Plastid</keyword>
<keyword id="KW-0687">Ribonucleoprotein</keyword>
<keyword id="KW-0689">Ribosomal protein</keyword>
<sequence length="136" mass="15424">MNYNPKRTRFRKQHRGRMKGISYRGNTICFGKYALQALEPAWITSRQIEAGRRAMTRNARRGGKIWVRIFPDKPVTVRPAETRMGSGKGSPEYWVAVVKPGRILYEMGGVTENIARRAISIAASKMPIRAQFIISG</sequence>
<evidence type="ECO:0000255" key="1">
    <source>
        <dbReference type="HAMAP-Rule" id="MF_01342"/>
    </source>
</evidence>
<evidence type="ECO:0000305" key="2"/>
<feature type="chain" id="PRO_0000251692" description="Large ribosomal subunit protein uL16c">
    <location>
        <begin position="1"/>
        <end position="136"/>
    </location>
</feature>
<organism>
    <name type="scientific">Helianthus annuus</name>
    <name type="common">Common sunflower</name>
    <dbReference type="NCBI Taxonomy" id="4232"/>
    <lineage>
        <taxon>Eukaryota</taxon>
        <taxon>Viridiplantae</taxon>
        <taxon>Streptophyta</taxon>
        <taxon>Embryophyta</taxon>
        <taxon>Tracheophyta</taxon>
        <taxon>Spermatophyta</taxon>
        <taxon>Magnoliopsida</taxon>
        <taxon>eudicotyledons</taxon>
        <taxon>Gunneridae</taxon>
        <taxon>Pentapetalae</taxon>
        <taxon>asterids</taxon>
        <taxon>campanulids</taxon>
        <taxon>Asterales</taxon>
        <taxon>Asteraceae</taxon>
        <taxon>Asteroideae</taxon>
        <taxon>Heliantheae alliance</taxon>
        <taxon>Heliantheae</taxon>
        <taxon>Helianthus</taxon>
    </lineage>
</organism>
<gene>
    <name evidence="1" type="primary">rpl16</name>
</gene>
<name>RK16_HELAN</name>
<reference key="1">
    <citation type="submission" date="2006-01" db="EMBL/GenBank/DDBJ databases">
        <title>A comparison of the first two published chloroplast genomes in Asteraceae: Lactuca and Helianthus.</title>
        <authorList>
            <person name="Timme R.E."/>
            <person name="Kuehl J.V."/>
            <person name="Boore J.L."/>
            <person name="Jansen R.K."/>
        </authorList>
    </citation>
    <scope>NUCLEOTIDE SEQUENCE [LARGE SCALE GENOMIC DNA]</scope>
    <source>
        <strain>cv. HA383</strain>
    </source>
</reference>